<gene>
    <name type="primary">K</name>
</gene>
<proteinExistence type="predicted"/>
<organism>
    <name type="scientific">Enterobacteria phage phiK</name>
    <name type="common">Bacteriophage phi-K</name>
    <dbReference type="NCBI Taxonomy" id="10848"/>
    <lineage>
        <taxon>Viruses</taxon>
        <taxon>Monodnaviria</taxon>
        <taxon>Sangervirae</taxon>
        <taxon>Phixviricota</taxon>
        <taxon>Malgrandaviricetes</taxon>
        <taxon>Petitvirales</taxon>
        <taxon>Microviridae</taxon>
        <taxon>Bullavirinae</taxon>
        <taxon>Alphatrevirus</taxon>
    </lineage>
</organism>
<feature type="chain" id="PRO_0000164911" description="K protein">
    <location>
        <begin position="1"/>
        <end position="53"/>
    </location>
</feature>
<protein>
    <recommendedName>
        <fullName>K protein</fullName>
    </recommendedName>
</protein>
<comment type="function">
    <text>No function has yet been ascribed to K protein.</text>
</comment>
<comment type="miscellaneous">
    <text>Gene K overlaps genes B, A, and C.</text>
</comment>
<comment type="miscellaneous">
    <text>Phi KhT, a host-range mutant of phi K, can grow on E.coli C and B, besides K12, and is more thermosensitive than the parental phage phi K.</text>
</comment>
<accession>Q38038</accession>
<reference key="1">
    <citation type="journal article" date="1996" name="J. Biochem.">
        <title>The virion proteins encoded by bacteriophage phi K and its host-range mutant phi KhT: host-range determination and DNA binding properties.</title>
        <authorList>
            <person name="Kodaira K."/>
            <person name="Oki M."/>
            <person name="Kakikawa M."/>
            <person name="Kimoto H."/>
            <person name="Taketo A."/>
        </authorList>
    </citation>
    <scope>NUCLEOTIDE SEQUENCE [GENOMIC DNA] (PHI-K AND MUTANT PHI KHT)</scope>
</reference>
<name>VGK_BPPHK</name>
<sequence>MKHVNTLLMQELRLLICELKRLKLSAVSDPDFSQEKIHAELDSLLCKLSRHFD</sequence>
<dbReference type="EMBL" id="X60323">
    <property type="protein sequence ID" value="CAA42887.1"/>
    <property type="molecule type" value="Genomic_DNA"/>
</dbReference>
<dbReference type="RefSeq" id="NP_043944.1">
    <property type="nucleotide sequence ID" value="NC_001730.1"/>
</dbReference>
<dbReference type="SMR" id="Q38038"/>
<dbReference type="GeneID" id="1261195"/>
<dbReference type="KEGG" id="vg:1261195"/>
<dbReference type="Proteomes" id="UP000002122">
    <property type="component" value="Segment"/>
</dbReference>
<organismHost>
    <name type="scientific">Escherichia coli</name>
    <dbReference type="NCBI Taxonomy" id="562"/>
</organismHost>